<comment type="interaction">
    <interactant intactId="EBI-715898">
        <id>Q8IYL3</id>
    </interactant>
    <interactant intactId="EBI-745305">
        <id>Q13422</id>
        <label>IKZF1</label>
    </interactant>
    <organismsDiffer>false</organismsDiffer>
    <experiments>4</experiments>
</comment>
<comment type="interaction">
    <interactant intactId="EBI-715898">
        <id>Q8IYL3</id>
    </interactant>
    <interactant intactId="EBI-11522367">
        <id>Q13422-7</id>
        <label>IKZF1</label>
    </interactant>
    <organismsDiffer>false</organismsDiffer>
    <experiments>3</experiments>
</comment>
<comment type="interaction">
    <interactant intactId="EBI-715898">
        <id>Q8IYL3</id>
    </interactant>
    <interactant intactId="EBI-16439278">
        <id>Q6FHY5</id>
        <label>MEOX2</label>
    </interactant>
    <organismsDiffer>false</organismsDiffer>
    <experiments>3</experiments>
</comment>
<comment type="interaction">
    <interactant intactId="EBI-715898">
        <id>Q8IYL3</id>
    </interactant>
    <interactant intactId="EBI-6423298">
        <id>Q8N165</id>
        <label>PDIK1L</label>
    </interactant>
    <organismsDiffer>false</organismsDiffer>
    <experiments>19</experiments>
</comment>
<comment type="interaction">
    <interactant intactId="EBI-715898">
        <id>Q8IYL3</id>
    </interactant>
    <interactant intactId="EBI-750109">
        <id>Q9NYB0</id>
        <label>TERF2IP</label>
    </interactant>
    <organismsDiffer>false</organismsDiffer>
    <experiments>2</experiments>
</comment>
<comment type="subcellular location">
    <subcellularLocation>
        <location evidence="4">Nucleus</location>
    </subcellularLocation>
</comment>
<comment type="similarity">
    <text evidence="6">Belongs to the UPF0688 family.</text>
</comment>
<comment type="sequence caution" evidence="6">
    <conflict type="erroneous initiation">
        <sequence resource="EMBL-CDS" id="AAH35643"/>
    </conflict>
</comment>
<sequence>MRSRKLTGAVRSSARLKARSCSAARLASAQEVAGSTSAKTACLTSSSHKATDTRTSKKFKCDKGHLVKSELQKLVPKNDSASLPKVTPETPCENEFAEGSALLPGSEAGVSVQQGAASLPLGGCRVVSDSRLAKTRDGLSVPKHSAGSGAEESNSSSTVQKQNEPGLQTEDVQKPPLQMDNSVFLDDDSNQPMPVSRFFGNVELMQDLPPASSSCPSMSRREFRKMHFRAKDDDDDDDDDAEM</sequence>
<evidence type="ECO:0000256" key="1">
    <source>
        <dbReference type="SAM" id="MobiDB-lite"/>
    </source>
</evidence>
<evidence type="ECO:0000269" key="2">
    <source>
    </source>
</evidence>
<evidence type="ECO:0000269" key="3">
    <source>
    </source>
</evidence>
<evidence type="ECO:0000269" key="4">
    <source>
    </source>
</evidence>
<evidence type="ECO:0000269" key="5">
    <source ref="3"/>
</evidence>
<evidence type="ECO:0000305" key="6"/>
<evidence type="ECO:0007744" key="7">
    <source>
    </source>
</evidence>
<evidence type="ECO:0007744" key="8">
    <source>
    </source>
</evidence>
<evidence type="ECO:0007744" key="9">
    <source>
    </source>
</evidence>
<accession>Q8IYL3</accession>
<accession>A8K0C8</accession>
<accession>A8MUG9</accession>
<accession>Q5SR20</accession>
<accession>Q6NX36</accession>
<keyword id="KW-0539">Nucleus</keyword>
<keyword id="KW-0597">Phosphoprotein</keyword>
<keyword id="KW-1267">Proteomics identification</keyword>
<keyword id="KW-1185">Reference proteome</keyword>
<proteinExistence type="evidence at protein level"/>
<gene>
    <name type="primary">C1orf174</name>
</gene>
<name>CA174_HUMAN</name>
<dbReference type="EMBL" id="AK289493">
    <property type="protein sequence ID" value="BAF82182.1"/>
    <property type="molecule type" value="mRNA"/>
</dbReference>
<dbReference type="EMBL" id="BX005110">
    <property type="status" value="NOT_ANNOTATED_CDS"/>
    <property type="molecule type" value="Genomic_DNA"/>
</dbReference>
<dbReference type="EMBL" id="AL691523">
    <property type="status" value="NOT_ANNOTATED_CDS"/>
    <property type="molecule type" value="Genomic_DNA"/>
</dbReference>
<dbReference type="EMBL" id="CH471130">
    <property type="protein sequence ID" value="EAW71492.1"/>
    <property type="molecule type" value="Genomic_DNA"/>
</dbReference>
<dbReference type="EMBL" id="BC035643">
    <property type="protein sequence ID" value="AAH35643.1"/>
    <property type="status" value="ALT_INIT"/>
    <property type="molecule type" value="mRNA"/>
</dbReference>
<dbReference type="EMBL" id="BC067302">
    <property type="protein sequence ID" value="AAH67302.1"/>
    <property type="molecule type" value="mRNA"/>
</dbReference>
<dbReference type="CCDS" id="CCDS53.1"/>
<dbReference type="RefSeq" id="NP_997239.2">
    <property type="nucleotide sequence ID" value="NM_207356.3"/>
</dbReference>
<dbReference type="BioGRID" id="130884">
    <property type="interactions" value="48"/>
</dbReference>
<dbReference type="FunCoup" id="Q8IYL3">
    <property type="interactions" value="1600"/>
</dbReference>
<dbReference type="IntAct" id="Q8IYL3">
    <property type="interactions" value="33"/>
</dbReference>
<dbReference type="STRING" id="9606.ENSP00000355306"/>
<dbReference type="GlyConnect" id="1886">
    <property type="glycosylation" value="2 N-Linked glycans (1 site)"/>
</dbReference>
<dbReference type="GlyCosmos" id="Q8IYL3">
    <property type="glycosylation" value="1 site, 1 glycan"/>
</dbReference>
<dbReference type="GlyGen" id="Q8IYL3">
    <property type="glycosylation" value="2 sites, 1 N-linked glycan (1 site), 1 O-linked glycan (1 site)"/>
</dbReference>
<dbReference type="iPTMnet" id="Q8IYL3"/>
<dbReference type="PhosphoSitePlus" id="Q8IYL3"/>
<dbReference type="SwissPalm" id="Q8IYL3"/>
<dbReference type="BioMuta" id="C1orf174"/>
<dbReference type="DMDM" id="152013372"/>
<dbReference type="jPOST" id="Q8IYL3"/>
<dbReference type="MassIVE" id="Q8IYL3"/>
<dbReference type="PaxDb" id="9606-ENSP00000355306"/>
<dbReference type="PeptideAtlas" id="Q8IYL3"/>
<dbReference type="ProteomicsDB" id="71198"/>
<dbReference type="Pumba" id="Q8IYL3"/>
<dbReference type="Antibodypedia" id="2157">
    <property type="antibodies" value="65 antibodies from 14 providers"/>
</dbReference>
<dbReference type="DNASU" id="339448"/>
<dbReference type="Ensembl" id="ENST00000361605.4">
    <property type="protein sequence ID" value="ENSP00000355306.3"/>
    <property type="gene ID" value="ENSG00000198912.12"/>
</dbReference>
<dbReference type="GeneID" id="339448"/>
<dbReference type="KEGG" id="hsa:339448"/>
<dbReference type="MANE-Select" id="ENST00000361605.4">
    <property type="protein sequence ID" value="ENSP00000355306.3"/>
    <property type="RefSeq nucleotide sequence ID" value="NM_207356.3"/>
    <property type="RefSeq protein sequence ID" value="NP_997239.2"/>
</dbReference>
<dbReference type="UCSC" id="uc001alf.4">
    <property type="organism name" value="human"/>
</dbReference>
<dbReference type="AGR" id="HGNC:27915"/>
<dbReference type="CTD" id="339448"/>
<dbReference type="GeneCards" id="C1orf174"/>
<dbReference type="HGNC" id="HGNC:27915">
    <property type="gene designation" value="C1orf174"/>
</dbReference>
<dbReference type="HPA" id="ENSG00000198912">
    <property type="expression patterns" value="Low tissue specificity"/>
</dbReference>
<dbReference type="neXtProt" id="NX_Q8IYL3"/>
<dbReference type="OpenTargets" id="ENSG00000198912"/>
<dbReference type="PharmGKB" id="PA143485318"/>
<dbReference type="VEuPathDB" id="HostDB:ENSG00000198912"/>
<dbReference type="eggNOG" id="ENOG502SBCG">
    <property type="taxonomic scope" value="Eukaryota"/>
</dbReference>
<dbReference type="GeneTree" id="ENSGT00390000016496"/>
<dbReference type="HOGENOM" id="CLU_096286_0_0_1"/>
<dbReference type="InParanoid" id="Q8IYL3"/>
<dbReference type="OMA" id="FKYDRGH"/>
<dbReference type="OrthoDB" id="8730115at2759"/>
<dbReference type="PAN-GO" id="Q8IYL3">
    <property type="GO annotations" value="0 GO annotations based on evolutionary models"/>
</dbReference>
<dbReference type="PhylomeDB" id="Q8IYL3"/>
<dbReference type="TreeFam" id="TF336079"/>
<dbReference type="PathwayCommons" id="Q8IYL3"/>
<dbReference type="SignaLink" id="Q8IYL3"/>
<dbReference type="BioGRID-ORCS" id="339448">
    <property type="hits" value="13 hits in 1153 CRISPR screens"/>
</dbReference>
<dbReference type="ChiTaRS" id="C1orf174">
    <property type="organism name" value="human"/>
</dbReference>
<dbReference type="GenomeRNAi" id="339448"/>
<dbReference type="Pharos" id="Q8IYL3">
    <property type="development level" value="Tdark"/>
</dbReference>
<dbReference type="PRO" id="PR:Q8IYL3"/>
<dbReference type="Proteomes" id="UP000005640">
    <property type="component" value="Chromosome 1"/>
</dbReference>
<dbReference type="RNAct" id="Q8IYL3">
    <property type="molecule type" value="protein"/>
</dbReference>
<dbReference type="Bgee" id="ENSG00000198912">
    <property type="expression patterns" value="Expressed in oocyte and 209 other cell types or tissues"/>
</dbReference>
<dbReference type="GO" id="GO:0005654">
    <property type="term" value="C:nucleoplasm"/>
    <property type="evidence" value="ECO:0000314"/>
    <property type="project" value="HPA"/>
</dbReference>
<dbReference type="InterPro" id="IPR031530">
    <property type="entry name" value="UPF0688"/>
</dbReference>
<dbReference type="PANTHER" id="PTHR28491">
    <property type="entry name" value="UPF0688 PROTEIN C1ORF174"/>
    <property type="match status" value="1"/>
</dbReference>
<dbReference type="PANTHER" id="PTHR28491:SF1">
    <property type="entry name" value="UPF0688 PROTEIN C1ORF174"/>
    <property type="match status" value="1"/>
</dbReference>
<dbReference type="Pfam" id="PF15772">
    <property type="entry name" value="UPF0688"/>
    <property type="match status" value="1"/>
</dbReference>
<feature type="chain" id="PRO_0000294244" description="UPF0688 protein C1orf174">
    <location>
        <begin position="1"/>
        <end position="243"/>
    </location>
</feature>
<feature type="region of interest" description="Disordered" evidence="1">
    <location>
        <begin position="78"/>
        <end position="100"/>
    </location>
</feature>
<feature type="region of interest" description="Disordered" evidence="1">
    <location>
        <begin position="132"/>
        <end position="243"/>
    </location>
</feature>
<feature type="compositionally biased region" description="Low complexity" evidence="1">
    <location>
        <begin position="145"/>
        <end position="157"/>
    </location>
</feature>
<feature type="compositionally biased region" description="Acidic residues" evidence="1">
    <location>
        <begin position="233"/>
        <end position="243"/>
    </location>
</feature>
<feature type="modified residue" description="Phosphoserine" evidence="8">
    <location>
        <position position="148"/>
    </location>
</feature>
<feature type="modified residue" description="Phosphoserine" evidence="7 9">
    <location>
        <position position="189"/>
    </location>
</feature>
<feature type="sequence variant" id="VAR_033152" description="In dbSNP:rs4274008." evidence="2 3 5">
    <original>T</original>
    <variation>R</variation>
    <location>
        <position position="53"/>
    </location>
</feature>
<feature type="sequence variant" id="VAR_033153" description="In dbSNP:rs10909820.">
    <original>A</original>
    <variation>S</variation>
    <location>
        <position position="101"/>
    </location>
</feature>
<feature type="sequence variant" id="VAR_057829" description="In dbSNP:rs12036962.">
    <original>P</original>
    <variation>A</variation>
    <location>
        <position position="165"/>
    </location>
</feature>
<protein>
    <recommendedName>
        <fullName>UPF0688 protein C1orf174</fullName>
    </recommendedName>
</protein>
<reference key="1">
    <citation type="journal article" date="2004" name="Nat. Genet.">
        <title>Complete sequencing and characterization of 21,243 full-length human cDNAs.</title>
        <authorList>
            <person name="Ota T."/>
            <person name="Suzuki Y."/>
            <person name="Nishikawa T."/>
            <person name="Otsuki T."/>
            <person name="Sugiyama T."/>
            <person name="Irie R."/>
            <person name="Wakamatsu A."/>
            <person name="Hayashi K."/>
            <person name="Sato H."/>
            <person name="Nagai K."/>
            <person name="Kimura K."/>
            <person name="Makita H."/>
            <person name="Sekine M."/>
            <person name="Obayashi M."/>
            <person name="Nishi T."/>
            <person name="Shibahara T."/>
            <person name="Tanaka T."/>
            <person name="Ishii S."/>
            <person name="Yamamoto J."/>
            <person name="Saito K."/>
            <person name="Kawai Y."/>
            <person name="Isono Y."/>
            <person name="Nakamura Y."/>
            <person name="Nagahari K."/>
            <person name="Murakami K."/>
            <person name="Yasuda T."/>
            <person name="Iwayanagi T."/>
            <person name="Wagatsuma M."/>
            <person name="Shiratori A."/>
            <person name="Sudo H."/>
            <person name="Hosoiri T."/>
            <person name="Kaku Y."/>
            <person name="Kodaira H."/>
            <person name="Kondo H."/>
            <person name="Sugawara M."/>
            <person name="Takahashi M."/>
            <person name="Kanda K."/>
            <person name="Yokoi T."/>
            <person name="Furuya T."/>
            <person name="Kikkawa E."/>
            <person name="Omura Y."/>
            <person name="Abe K."/>
            <person name="Kamihara K."/>
            <person name="Katsuta N."/>
            <person name="Sato K."/>
            <person name="Tanikawa M."/>
            <person name="Yamazaki M."/>
            <person name="Ninomiya K."/>
            <person name="Ishibashi T."/>
            <person name="Yamashita H."/>
            <person name="Murakawa K."/>
            <person name="Fujimori K."/>
            <person name="Tanai H."/>
            <person name="Kimata M."/>
            <person name="Watanabe M."/>
            <person name="Hiraoka S."/>
            <person name="Chiba Y."/>
            <person name="Ishida S."/>
            <person name="Ono Y."/>
            <person name="Takiguchi S."/>
            <person name="Watanabe S."/>
            <person name="Yosida M."/>
            <person name="Hotuta T."/>
            <person name="Kusano J."/>
            <person name="Kanehori K."/>
            <person name="Takahashi-Fujii A."/>
            <person name="Hara H."/>
            <person name="Tanase T.-O."/>
            <person name="Nomura Y."/>
            <person name="Togiya S."/>
            <person name="Komai F."/>
            <person name="Hara R."/>
            <person name="Takeuchi K."/>
            <person name="Arita M."/>
            <person name="Imose N."/>
            <person name="Musashino K."/>
            <person name="Yuuki H."/>
            <person name="Oshima A."/>
            <person name="Sasaki N."/>
            <person name="Aotsuka S."/>
            <person name="Yoshikawa Y."/>
            <person name="Matsunawa H."/>
            <person name="Ichihara T."/>
            <person name="Shiohata N."/>
            <person name="Sano S."/>
            <person name="Moriya S."/>
            <person name="Momiyama H."/>
            <person name="Satoh N."/>
            <person name="Takami S."/>
            <person name="Terashima Y."/>
            <person name="Suzuki O."/>
            <person name="Nakagawa S."/>
            <person name="Senoh A."/>
            <person name="Mizoguchi H."/>
            <person name="Goto Y."/>
            <person name="Shimizu F."/>
            <person name="Wakebe H."/>
            <person name="Hishigaki H."/>
            <person name="Watanabe T."/>
            <person name="Sugiyama A."/>
            <person name="Takemoto M."/>
            <person name="Kawakami B."/>
            <person name="Yamazaki M."/>
            <person name="Watanabe K."/>
            <person name="Kumagai A."/>
            <person name="Itakura S."/>
            <person name="Fukuzumi Y."/>
            <person name="Fujimori Y."/>
            <person name="Komiyama M."/>
            <person name="Tashiro H."/>
            <person name="Tanigami A."/>
            <person name="Fujiwara T."/>
            <person name="Ono T."/>
            <person name="Yamada K."/>
            <person name="Fujii Y."/>
            <person name="Ozaki K."/>
            <person name="Hirao M."/>
            <person name="Ohmori Y."/>
            <person name="Kawabata A."/>
            <person name="Hikiji T."/>
            <person name="Kobatake N."/>
            <person name="Inagaki H."/>
            <person name="Ikema Y."/>
            <person name="Okamoto S."/>
            <person name="Okitani R."/>
            <person name="Kawakami T."/>
            <person name="Noguchi S."/>
            <person name="Itoh T."/>
            <person name="Shigeta K."/>
            <person name="Senba T."/>
            <person name="Matsumura K."/>
            <person name="Nakajima Y."/>
            <person name="Mizuno T."/>
            <person name="Morinaga M."/>
            <person name="Sasaki M."/>
            <person name="Togashi T."/>
            <person name="Oyama M."/>
            <person name="Hata H."/>
            <person name="Watanabe M."/>
            <person name="Komatsu T."/>
            <person name="Mizushima-Sugano J."/>
            <person name="Satoh T."/>
            <person name="Shirai Y."/>
            <person name="Takahashi Y."/>
            <person name="Nakagawa K."/>
            <person name="Okumura K."/>
            <person name="Nagase T."/>
            <person name="Nomura N."/>
            <person name="Kikuchi H."/>
            <person name="Masuho Y."/>
            <person name="Yamashita R."/>
            <person name="Nakai K."/>
            <person name="Yada T."/>
            <person name="Nakamura Y."/>
            <person name="Ohara O."/>
            <person name="Isogai T."/>
            <person name="Sugano S."/>
        </authorList>
    </citation>
    <scope>NUCLEOTIDE SEQUENCE [LARGE SCALE MRNA]</scope>
    <scope>VARIANT ARG-53</scope>
    <source>
        <tissue>Cerebellum</tissue>
    </source>
</reference>
<reference key="2">
    <citation type="journal article" date="2006" name="Nature">
        <title>The DNA sequence and biological annotation of human chromosome 1.</title>
        <authorList>
            <person name="Gregory S.G."/>
            <person name="Barlow K.F."/>
            <person name="McLay K.E."/>
            <person name="Kaul R."/>
            <person name="Swarbreck D."/>
            <person name="Dunham A."/>
            <person name="Scott C.E."/>
            <person name="Howe K.L."/>
            <person name="Woodfine K."/>
            <person name="Spencer C.C.A."/>
            <person name="Jones M.C."/>
            <person name="Gillson C."/>
            <person name="Searle S."/>
            <person name="Zhou Y."/>
            <person name="Kokocinski F."/>
            <person name="McDonald L."/>
            <person name="Evans R."/>
            <person name="Phillips K."/>
            <person name="Atkinson A."/>
            <person name="Cooper R."/>
            <person name="Jones C."/>
            <person name="Hall R.E."/>
            <person name="Andrews T.D."/>
            <person name="Lloyd C."/>
            <person name="Ainscough R."/>
            <person name="Almeida J.P."/>
            <person name="Ambrose K.D."/>
            <person name="Anderson F."/>
            <person name="Andrew R.W."/>
            <person name="Ashwell R.I.S."/>
            <person name="Aubin K."/>
            <person name="Babbage A.K."/>
            <person name="Bagguley C.L."/>
            <person name="Bailey J."/>
            <person name="Beasley H."/>
            <person name="Bethel G."/>
            <person name="Bird C.P."/>
            <person name="Bray-Allen S."/>
            <person name="Brown J.Y."/>
            <person name="Brown A.J."/>
            <person name="Buckley D."/>
            <person name="Burton J."/>
            <person name="Bye J."/>
            <person name="Carder C."/>
            <person name="Chapman J.C."/>
            <person name="Clark S.Y."/>
            <person name="Clarke G."/>
            <person name="Clee C."/>
            <person name="Cobley V."/>
            <person name="Collier R.E."/>
            <person name="Corby N."/>
            <person name="Coville G.J."/>
            <person name="Davies J."/>
            <person name="Deadman R."/>
            <person name="Dunn M."/>
            <person name="Earthrowl M."/>
            <person name="Ellington A.G."/>
            <person name="Errington H."/>
            <person name="Frankish A."/>
            <person name="Frankland J."/>
            <person name="French L."/>
            <person name="Garner P."/>
            <person name="Garnett J."/>
            <person name="Gay L."/>
            <person name="Ghori M.R.J."/>
            <person name="Gibson R."/>
            <person name="Gilby L.M."/>
            <person name="Gillett W."/>
            <person name="Glithero R.J."/>
            <person name="Grafham D.V."/>
            <person name="Griffiths C."/>
            <person name="Griffiths-Jones S."/>
            <person name="Grocock R."/>
            <person name="Hammond S."/>
            <person name="Harrison E.S.I."/>
            <person name="Hart E."/>
            <person name="Haugen E."/>
            <person name="Heath P.D."/>
            <person name="Holmes S."/>
            <person name="Holt K."/>
            <person name="Howden P.J."/>
            <person name="Hunt A.R."/>
            <person name="Hunt S.E."/>
            <person name="Hunter G."/>
            <person name="Isherwood J."/>
            <person name="James R."/>
            <person name="Johnson C."/>
            <person name="Johnson D."/>
            <person name="Joy A."/>
            <person name="Kay M."/>
            <person name="Kershaw J.K."/>
            <person name="Kibukawa M."/>
            <person name="Kimberley A.M."/>
            <person name="King A."/>
            <person name="Knights A.J."/>
            <person name="Lad H."/>
            <person name="Laird G."/>
            <person name="Lawlor S."/>
            <person name="Leongamornlert D.A."/>
            <person name="Lloyd D.M."/>
            <person name="Loveland J."/>
            <person name="Lovell J."/>
            <person name="Lush M.J."/>
            <person name="Lyne R."/>
            <person name="Martin S."/>
            <person name="Mashreghi-Mohammadi M."/>
            <person name="Matthews L."/>
            <person name="Matthews N.S.W."/>
            <person name="McLaren S."/>
            <person name="Milne S."/>
            <person name="Mistry S."/>
            <person name="Moore M.J.F."/>
            <person name="Nickerson T."/>
            <person name="O'Dell C.N."/>
            <person name="Oliver K."/>
            <person name="Palmeiri A."/>
            <person name="Palmer S.A."/>
            <person name="Parker A."/>
            <person name="Patel D."/>
            <person name="Pearce A.V."/>
            <person name="Peck A.I."/>
            <person name="Pelan S."/>
            <person name="Phelps K."/>
            <person name="Phillimore B.J."/>
            <person name="Plumb R."/>
            <person name="Rajan J."/>
            <person name="Raymond C."/>
            <person name="Rouse G."/>
            <person name="Saenphimmachak C."/>
            <person name="Sehra H.K."/>
            <person name="Sheridan E."/>
            <person name="Shownkeen R."/>
            <person name="Sims S."/>
            <person name="Skuce C.D."/>
            <person name="Smith M."/>
            <person name="Steward C."/>
            <person name="Subramanian S."/>
            <person name="Sycamore N."/>
            <person name="Tracey A."/>
            <person name="Tromans A."/>
            <person name="Van Helmond Z."/>
            <person name="Wall M."/>
            <person name="Wallis J.M."/>
            <person name="White S."/>
            <person name="Whitehead S.L."/>
            <person name="Wilkinson J.E."/>
            <person name="Willey D.L."/>
            <person name="Williams H."/>
            <person name="Wilming L."/>
            <person name="Wray P.W."/>
            <person name="Wu Z."/>
            <person name="Coulson A."/>
            <person name="Vaudin M."/>
            <person name="Sulston J.E."/>
            <person name="Durbin R.M."/>
            <person name="Hubbard T."/>
            <person name="Wooster R."/>
            <person name="Dunham I."/>
            <person name="Carter N.P."/>
            <person name="McVean G."/>
            <person name="Ross M.T."/>
            <person name="Harrow J."/>
            <person name="Olson M.V."/>
            <person name="Beck S."/>
            <person name="Rogers J."/>
            <person name="Bentley D.R."/>
        </authorList>
    </citation>
    <scope>NUCLEOTIDE SEQUENCE [LARGE SCALE GENOMIC DNA]</scope>
</reference>
<reference key="3">
    <citation type="submission" date="2005-07" db="EMBL/GenBank/DDBJ databases">
        <authorList>
            <person name="Mural R.J."/>
            <person name="Istrail S."/>
            <person name="Sutton G.G."/>
            <person name="Florea L."/>
            <person name="Halpern A.L."/>
            <person name="Mobarry C.M."/>
            <person name="Lippert R."/>
            <person name="Walenz B."/>
            <person name="Shatkay H."/>
            <person name="Dew I."/>
            <person name="Miller J.R."/>
            <person name="Flanigan M.J."/>
            <person name="Edwards N.J."/>
            <person name="Bolanos R."/>
            <person name="Fasulo D."/>
            <person name="Halldorsson B.V."/>
            <person name="Hannenhalli S."/>
            <person name="Turner R."/>
            <person name="Yooseph S."/>
            <person name="Lu F."/>
            <person name="Nusskern D.R."/>
            <person name="Shue B.C."/>
            <person name="Zheng X.H."/>
            <person name="Zhong F."/>
            <person name="Delcher A.L."/>
            <person name="Huson D.H."/>
            <person name="Kravitz S.A."/>
            <person name="Mouchard L."/>
            <person name="Reinert K."/>
            <person name="Remington K.A."/>
            <person name="Clark A.G."/>
            <person name="Waterman M.S."/>
            <person name="Eichler E.E."/>
            <person name="Adams M.D."/>
            <person name="Hunkapiller M.W."/>
            <person name="Myers E.W."/>
            <person name="Venter J.C."/>
        </authorList>
    </citation>
    <scope>NUCLEOTIDE SEQUENCE [LARGE SCALE GENOMIC DNA]</scope>
    <scope>VARIANT ARG-53</scope>
</reference>
<reference key="4">
    <citation type="journal article" date="2004" name="Genome Res.">
        <title>The status, quality, and expansion of the NIH full-length cDNA project: the Mammalian Gene Collection (MGC).</title>
        <authorList>
            <consortium name="The MGC Project Team"/>
        </authorList>
    </citation>
    <scope>NUCLEOTIDE SEQUENCE [LARGE SCALE MRNA]</scope>
    <scope>VARIANT ARG-53</scope>
    <source>
        <tissue>Brain</tissue>
        <tissue>Skin</tissue>
    </source>
</reference>
<reference key="5">
    <citation type="journal article" date="2009" name="Sci. Signal.">
        <title>Quantitative phosphoproteomic analysis of T cell receptor signaling reveals system-wide modulation of protein-protein interactions.</title>
        <authorList>
            <person name="Mayya V."/>
            <person name="Lundgren D.H."/>
            <person name="Hwang S.-I."/>
            <person name="Rezaul K."/>
            <person name="Wu L."/>
            <person name="Eng J.K."/>
            <person name="Rodionov V."/>
            <person name="Han D.K."/>
        </authorList>
    </citation>
    <scope>PHOSPHORYLATION [LARGE SCALE ANALYSIS] AT SER-189</scope>
    <scope>IDENTIFICATION BY MASS SPECTROMETRY [LARGE SCALE ANALYSIS]</scope>
    <source>
        <tissue>Leukemic T-cell</tissue>
    </source>
</reference>
<reference key="6">
    <citation type="journal article" date="2011" name="BMC Syst. Biol.">
        <title>Initial characterization of the human central proteome.</title>
        <authorList>
            <person name="Burkard T.R."/>
            <person name="Planyavsky M."/>
            <person name="Kaupe I."/>
            <person name="Breitwieser F.P."/>
            <person name="Buerckstuemmer T."/>
            <person name="Bennett K.L."/>
            <person name="Superti-Furga G."/>
            <person name="Colinge J."/>
        </authorList>
    </citation>
    <scope>IDENTIFICATION BY MASS SPECTROMETRY [LARGE SCALE ANALYSIS]</scope>
</reference>
<reference key="7">
    <citation type="journal article" date="2011" name="Sci. Signal.">
        <title>System-wide temporal characterization of the proteome and phosphoproteome of human embryonic stem cell differentiation.</title>
        <authorList>
            <person name="Rigbolt K.T."/>
            <person name="Prokhorova T.A."/>
            <person name="Akimov V."/>
            <person name="Henningsen J."/>
            <person name="Johansen P.T."/>
            <person name="Kratchmarova I."/>
            <person name="Kassem M."/>
            <person name="Mann M."/>
            <person name="Olsen J.V."/>
            <person name="Blagoev B."/>
        </authorList>
    </citation>
    <scope>PHOSPHORYLATION [LARGE SCALE ANALYSIS] AT SER-148</scope>
    <scope>IDENTIFICATION BY MASS SPECTROMETRY [LARGE SCALE ANALYSIS]</scope>
</reference>
<reference key="8">
    <citation type="journal article" date="2012" name="J. Proteomics">
        <title>Systematic validation of antibody binding and protein subcellular localization using siRNA and confocal microscopy.</title>
        <authorList>
            <person name="Stadler C."/>
            <person name="Hjelmare M."/>
            <person name="Neumann B."/>
            <person name="Jonasson K."/>
            <person name="Pepperkok R."/>
            <person name="Uhlen M."/>
            <person name="Lundberg E."/>
        </authorList>
    </citation>
    <scope>SUBCELLULAR LOCATION</scope>
</reference>
<reference key="9">
    <citation type="journal article" date="2013" name="J. Proteome Res.">
        <title>Toward a comprehensive characterization of a human cancer cell phosphoproteome.</title>
        <authorList>
            <person name="Zhou H."/>
            <person name="Di Palma S."/>
            <person name="Preisinger C."/>
            <person name="Peng M."/>
            <person name="Polat A.N."/>
            <person name="Heck A.J."/>
            <person name="Mohammed S."/>
        </authorList>
    </citation>
    <scope>IDENTIFICATION BY MASS SPECTROMETRY [LARGE SCALE ANALYSIS]</scope>
    <source>
        <tissue>Cervix carcinoma</tissue>
    </source>
</reference>
<reference key="10">
    <citation type="journal article" date="2014" name="J. Proteomics">
        <title>An enzyme assisted RP-RPLC approach for in-depth analysis of human liver phosphoproteome.</title>
        <authorList>
            <person name="Bian Y."/>
            <person name="Song C."/>
            <person name="Cheng K."/>
            <person name="Dong M."/>
            <person name="Wang F."/>
            <person name="Huang J."/>
            <person name="Sun D."/>
            <person name="Wang L."/>
            <person name="Ye M."/>
            <person name="Zou H."/>
        </authorList>
    </citation>
    <scope>PHOSPHORYLATION [LARGE SCALE ANALYSIS] AT SER-189</scope>
    <scope>IDENTIFICATION BY MASS SPECTROMETRY [LARGE SCALE ANALYSIS]</scope>
    <source>
        <tissue>Liver</tissue>
    </source>
</reference>
<organism>
    <name type="scientific">Homo sapiens</name>
    <name type="common">Human</name>
    <dbReference type="NCBI Taxonomy" id="9606"/>
    <lineage>
        <taxon>Eukaryota</taxon>
        <taxon>Metazoa</taxon>
        <taxon>Chordata</taxon>
        <taxon>Craniata</taxon>
        <taxon>Vertebrata</taxon>
        <taxon>Euteleostomi</taxon>
        <taxon>Mammalia</taxon>
        <taxon>Eutheria</taxon>
        <taxon>Euarchontoglires</taxon>
        <taxon>Primates</taxon>
        <taxon>Haplorrhini</taxon>
        <taxon>Catarrhini</taxon>
        <taxon>Hominidae</taxon>
        <taxon>Homo</taxon>
    </lineage>
</organism>